<sequence length="393" mass="43751">MPLSAGSLRRRPKFAAPLLSPACLHRLSVPGEFAARLDDDDAAGVGEEEEEESGRRAAAVLVVGPLGKVWRVELRRSPAGDGEAWLGGGWSELAAAHGLGEGWGVVLRLERRGVASLRVFDPGFCLARFCTPHAGMRTKDRPRFIKLLQQEDLEKMKIPEKFVQQHLTETYTNNHQNAIIVCPLGKFWRVELQREQPDVLLRDGWAPFLAAHDLSEGNILLFRYEGNMVFTVEVFLQNGCLKEYKTAALYLTDGTEGPSNAPQQSAAKVGVSPVKRKRTRRIEGTCLEGPNRKSRASPISVKVEPHKKHVSIVSQNSFTKEMTAYSIHSLLSVRGTFCSQIGLLEACAITLKISMKKKGSWRVAFKTANTYGYINGPGWRKFCLENELEVQRR</sequence>
<feature type="chain" id="PRO_0000376972" description="Putative B3 domain-containing protein Os06g0632500">
    <location>
        <begin position="1"/>
        <end position="393"/>
    </location>
</feature>
<feature type="DNA-binding region" description="TF-B3 1" evidence="1">
    <location>
        <begin position="27"/>
        <end position="123"/>
    </location>
</feature>
<feature type="DNA-binding region" description="TF-B3 2" evidence="1">
    <location>
        <begin position="141"/>
        <end position="238"/>
    </location>
</feature>
<feature type="DNA-binding region" description="TF-B3 3" evidence="1">
    <location>
        <begin position="316"/>
        <end position="393"/>
    </location>
</feature>
<keyword id="KW-0238">DNA-binding</keyword>
<keyword id="KW-0539">Nucleus</keyword>
<keyword id="KW-1185">Reference proteome</keyword>
<keyword id="KW-0677">Repeat</keyword>
<keyword id="KW-0804">Transcription</keyword>
<keyword id="KW-0805">Transcription regulation</keyword>
<proteinExistence type="inferred from homology"/>
<protein>
    <recommendedName>
        <fullName>Putative B3 domain-containing protein Os06g0632500</fullName>
    </recommendedName>
</protein>
<gene>
    <name type="ordered locus">Os06g0632500</name>
    <name type="ordered locus">LOC_Os06g42630</name>
    <name type="ORF">P0505A04.21</name>
</gene>
<reference key="1">
    <citation type="journal article" date="2005" name="Nature">
        <title>The map-based sequence of the rice genome.</title>
        <authorList>
            <consortium name="International rice genome sequencing project (IRGSP)"/>
        </authorList>
    </citation>
    <scope>NUCLEOTIDE SEQUENCE [LARGE SCALE GENOMIC DNA]</scope>
    <source>
        <strain>cv. Nipponbare</strain>
    </source>
</reference>
<reference key="2">
    <citation type="journal article" date="2013" name="Rice">
        <title>Improvement of the Oryza sativa Nipponbare reference genome using next generation sequence and optical map data.</title>
        <authorList>
            <person name="Kawahara Y."/>
            <person name="de la Bastide M."/>
            <person name="Hamilton J.P."/>
            <person name="Kanamori H."/>
            <person name="McCombie W.R."/>
            <person name="Ouyang S."/>
            <person name="Schwartz D.C."/>
            <person name="Tanaka T."/>
            <person name="Wu J."/>
            <person name="Zhou S."/>
            <person name="Childs K.L."/>
            <person name="Davidson R.M."/>
            <person name="Lin H."/>
            <person name="Quesada-Ocampo L."/>
            <person name="Vaillancourt B."/>
            <person name="Sakai H."/>
            <person name="Lee S.S."/>
            <person name="Kim J."/>
            <person name="Numa H."/>
            <person name="Itoh T."/>
            <person name="Buell C.R."/>
            <person name="Matsumoto T."/>
        </authorList>
    </citation>
    <scope>GENOME REANNOTATION</scope>
    <source>
        <strain>cv. Nipponbare</strain>
    </source>
</reference>
<organism>
    <name type="scientific">Oryza sativa subsp. japonica</name>
    <name type="common">Rice</name>
    <dbReference type="NCBI Taxonomy" id="39947"/>
    <lineage>
        <taxon>Eukaryota</taxon>
        <taxon>Viridiplantae</taxon>
        <taxon>Streptophyta</taxon>
        <taxon>Embryophyta</taxon>
        <taxon>Tracheophyta</taxon>
        <taxon>Spermatophyta</taxon>
        <taxon>Magnoliopsida</taxon>
        <taxon>Liliopsida</taxon>
        <taxon>Poales</taxon>
        <taxon>Poaceae</taxon>
        <taxon>BOP clade</taxon>
        <taxon>Oryzoideae</taxon>
        <taxon>Oryzeae</taxon>
        <taxon>Oryzinae</taxon>
        <taxon>Oryza</taxon>
        <taxon>Oryza sativa</taxon>
    </lineage>
</organism>
<name>Y6325_ORYSJ</name>
<dbReference type="EMBL" id="AP004792">
    <property type="protein sequence ID" value="BAD37802.1"/>
    <property type="molecule type" value="Genomic_DNA"/>
</dbReference>
<dbReference type="EMBL" id="AP014962">
    <property type="protein sequence ID" value="BAS98739.1"/>
    <property type="molecule type" value="Genomic_DNA"/>
</dbReference>
<dbReference type="SMR" id="Q67VL7"/>
<dbReference type="FunCoup" id="Q67VL7">
    <property type="interactions" value="3"/>
</dbReference>
<dbReference type="STRING" id="39947.Q67VL7"/>
<dbReference type="PaxDb" id="39947-Q67VL7"/>
<dbReference type="EnsemblPlants" id="Os06t0632500-00">
    <property type="protein sequence ID" value="Os06t0632500-00"/>
    <property type="gene ID" value="Os06g0632500"/>
</dbReference>
<dbReference type="Gramene" id="Os06t0632500-00">
    <property type="protein sequence ID" value="Os06t0632500-00"/>
    <property type="gene ID" value="Os06g0632500"/>
</dbReference>
<dbReference type="eggNOG" id="ENOG502SQDG">
    <property type="taxonomic scope" value="Eukaryota"/>
</dbReference>
<dbReference type="HOGENOM" id="CLU_031663_1_0_1"/>
<dbReference type="InParanoid" id="Q67VL7"/>
<dbReference type="OMA" id="NILVFRY"/>
<dbReference type="Proteomes" id="UP000000763">
    <property type="component" value="Chromosome 6"/>
</dbReference>
<dbReference type="Proteomes" id="UP000059680">
    <property type="component" value="Chromosome 6"/>
</dbReference>
<dbReference type="GO" id="GO:0005634">
    <property type="term" value="C:nucleus"/>
    <property type="evidence" value="ECO:0007669"/>
    <property type="project" value="UniProtKB-SubCell"/>
</dbReference>
<dbReference type="GO" id="GO:0003677">
    <property type="term" value="F:DNA binding"/>
    <property type="evidence" value="ECO:0007669"/>
    <property type="project" value="UniProtKB-KW"/>
</dbReference>
<dbReference type="CDD" id="cd10017">
    <property type="entry name" value="B3_DNA"/>
    <property type="match status" value="2"/>
</dbReference>
<dbReference type="Gene3D" id="2.40.330.10">
    <property type="entry name" value="DNA-binding pseudobarrel domain"/>
    <property type="match status" value="3"/>
</dbReference>
<dbReference type="InterPro" id="IPR003340">
    <property type="entry name" value="B3_DNA-bd"/>
</dbReference>
<dbReference type="InterPro" id="IPR015300">
    <property type="entry name" value="DNA-bd_pseudobarrel_sf"/>
</dbReference>
<dbReference type="InterPro" id="IPR039218">
    <property type="entry name" value="REM_fam"/>
</dbReference>
<dbReference type="PANTHER" id="PTHR31674">
    <property type="entry name" value="B3 DOMAIN-CONTAINING PROTEIN REM-LIKE 3-RELATED"/>
    <property type="match status" value="1"/>
</dbReference>
<dbReference type="PANTHER" id="PTHR31674:SF62">
    <property type="entry name" value="B3 DOMAIN-CONTAINING PROTEIN REM14-RELATED"/>
    <property type="match status" value="1"/>
</dbReference>
<dbReference type="Pfam" id="PF02362">
    <property type="entry name" value="B3"/>
    <property type="match status" value="2"/>
</dbReference>
<dbReference type="SMART" id="SM01019">
    <property type="entry name" value="B3"/>
    <property type="match status" value="2"/>
</dbReference>
<dbReference type="SUPFAM" id="SSF101936">
    <property type="entry name" value="DNA-binding pseudobarrel domain"/>
    <property type="match status" value="3"/>
</dbReference>
<dbReference type="PROSITE" id="PS50863">
    <property type="entry name" value="B3"/>
    <property type="match status" value="3"/>
</dbReference>
<comment type="subcellular location">
    <subcellularLocation>
        <location evidence="1">Nucleus</location>
    </subcellularLocation>
</comment>
<accession>Q67VL7</accession>
<accession>A0A0P0WZ63</accession>
<evidence type="ECO:0000255" key="1">
    <source>
        <dbReference type="PROSITE-ProRule" id="PRU00326"/>
    </source>
</evidence>